<keyword id="KW-0067">ATP-binding</keyword>
<keyword id="KW-0156">Chromatin regulator</keyword>
<keyword id="KW-0175">Coiled coil</keyword>
<keyword id="KW-0227">DNA damage</keyword>
<keyword id="KW-0234">DNA repair</keyword>
<keyword id="KW-0238">DNA-binding</keyword>
<keyword id="KW-0255">Endonuclease</keyword>
<keyword id="KW-0967">Endosome</keyword>
<keyword id="KW-0378">Hydrolase</keyword>
<keyword id="KW-0381">Hypersensitive response</keyword>
<keyword id="KW-0418">Kinase</keyword>
<keyword id="KW-0540">Nuclease</keyword>
<keyword id="KW-0547">Nucleotide-binding</keyword>
<keyword id="KW-0539">Nucleus</keyword>
<keyword id="KW-0611">Plant defense</keyword>
<keyword id="KW-1185">Reference proteome</keyword>
<keyword id="KW-0694">RNA-binding</keyword>
<keyword id="KW-0943">RNA-mediated gene silencing</keyword>
<keyword id="KW-0808">Transferase</keyword>
<evidence type="ECO:0000250" key="1">
    <source>
        <dbReference type="UniProtKB" id="Q56Y74"/>
    </source>
</evidence>
<evidence type="ECO:0000250" key="2">
    <source>
        <dbReference type="UniProtKB" id="Q84WV6"/>
    </source>
</evidence>
<evidence type="ECO:0000255" key="3"/>
<evidence type="ECO:0000255" key="4">
    <source>
        <dbReference type="PROSITE-ProRule" id="PRU00768"/>
    </source>
</evidence>
<evidence type="ECO:0000269" key="5">
    <source>
    </source>
</evidence>
<evidence type="ECO:0000269" key="6">
    <source>
    </source>
</evidence>
<evidence type="ECO:0000269" key="7">
    <source>
    </source>
</evidence>
<evidence type="ECO:0000269" key="8">
    <source>
    </source>
</evidence>
<evidence type="ECO:0000269" key="9">
    <source>
    </source>
</evidence>
<evidence type="ECO:0000303" key="10">
    <source>
    </source>
</evidence>
<evidence type="ECO:0000303" key="11">
    <source>
    </source>
</evidence>
<evidence type="ECO:0000305" key="12"/>
<evidence type="ECO:0000312" key="13">
    <source>
        <dbReference type="Araport" id="AT4G36280"/>
    </source>
</evidence>
<evidence type="ECO:0000312" key="14">
    <source>
        <dbReference type="EMBL" id="AAW70385.1"/>
    </source>
</evidence>
<evidence type="ECO:0000312" key="15">
    <source>
        <dbReference type="EMBL" id="CAA18134.1"/>
    </source>
</evidence>
<sequence>MPPMAKNAAVTDVVHLDSDSDSDNGVVGGRESASTIAGAATMAPRETLECRSFWKAGDYFVIPNVVTPTAPGMLEHARVHPRFLHSNATSHKWAFGAIAELLDNAVDEIQNGATFVKIDKINIVKDNSPALVFQDDGGGMDPAGLRKCMSLGYSSKKSNTTIGQYGNGFKTSTMRLGADAIVFSRSTRGGTSTQSVGILSYTFLRKTGQDDVTVPMIDIDISKERPQPIIYGSPEDWAANLEILLKWSPFSTEDELLQQFEDVGTHGTKVIIYNLWLNDEGIYELSFDDDEEDIRLRDESVNDGKRLHHKILELRSHISYHLRYSLRAYASMLYLKKFKNFKIIIRGIPVEQFNIADGFRFPEIIKYKPHTATTEQASTEIKIGFVKEAPKLAICGFNVYHKNRLIRPFWKVTMGGDSTGHGVVGVLEANFIEPAHDKQDFERSSLFQRLEARLKKIVYSYWYSHCHLLGYHKYQMPADKSKKIAIPDQPPTISTVNPSPLPSDKISQGGPIIREINLSNATSSRTVAFASPHLRNSTGLRSNFQPVQLNPQPTAADTGNNLDGKSAGEIRQENLQLFMRCEEYIKKENETEQTVKSLEKELEEFKSKCAHLALLVDAKKKEMQQA</sequence>
<dbReference type="EC" id="3.6.-.-"/>
<dbReference type="EMBL" id="AL022141">
    <property type="protein sequence ID" value="CAA18134.1"/>
    <property type="status" value="ALT_SEQ"/>
    <property type="molecule type" value="Genomic_DNA"/>
</dbReference>
<dbReference type="EMBL" id="AL161589">
    <property type="protein sequence ID" value="CAB80299.1"/>
    <property type="status" value="ALT_SEQ"/>
    <property type="molecule type" value="Genomic_DNA"/>
</dbReference>
<dbReference type="EMBL" id="CP002687">
    <property type="protein sequence ID" value="AEE86643.1"/>
    <property type="molecule type" value="Genomic_DNA"/>
</dbReference>
<dbReference type="EMBL" id="BT002955">
    <property type="protein sequence ID" value="AAO22768.1"/>
    <property type="molecule type" value="mRNA"/>
</dbReference>
<dbReference type="EMBL" id="BT020539">
    <property type="protein sequence ID" value="AAW70385.1"/>
    <property type="molecule type" value="mRNA"/>
</dbReference>
<dbReference type="PIR" id="T04597">
    <property type="entry name" value="T04597"/>
</dbReference>
<dbReference type="RefSeq" id="NP_195351.2">
    <property type="nucleotide sequence ID" value="NM_119796.4"/>
</dbReference>
<dbReference type="SMR" id="Q5FV35"/>
<dbReference type="FunCoup" id="Q5FV35">
    <property type="interactions" value="1752"/>
</dbReference>
<dbReference type="STRING" id="3702.Q5FV35"/>
<dbReference type="GlyGen" id="Q5FV35">
    <property type="glycosylation" value="2 sites"/>
</dbReference>
<dbReference type="PaxDb" id="3702-AT4G36280.1"/>
<dbReference type="ProteomicsDB" id="238307"/>
<dbReference type="EnsemblPlants" id="AT4G36280.1">
    <property type="protein sequence ID" value="AT4G36280.1"/>
    <property type="gene ID" value="AT4G36280"/>
</dbReference>
<dbReference type="GeneID" id="829785"/>
<dbReference type="Gramene" id="AT4G36280.1">
    <property type="protein sequence ID" value="AT4G36280.1"/>
    <property type="gene ID" value="AT4G36280"/>
</dbReference>
<dbReference type="KEGG" id="ath:AT4G36280"/>
<dbReference type="Araport" id="AT4G36280"/>
<dbReference type="TAIR" id="AT4G36280">
    <property type="gene designation" value="CRH1"/>
</dbReference>
<dbReference type="eggNOG" id="KOG1845">
    <property type="taxonomic scope" value="Eukaryota"/>
</dbReference>
<dbReference type="HOGENOM" id="CLU_011516_4_1_1"/>
<dbReference type="InParanoid" id="Q5FV35"/>
<dbReference type="OMA" id="FEDVGTH"/>
<dbReference type="PhylomeDB" id="Q5FV35"/>
<dbReference type="PRO" id="PR:Q5FV35"/>
<dbReference type="Proteomes" id="UP000006548">
    <property type="component" value="Chromosome 4"/>
</dbReference>
<dbReference type="ExpressionAtlas" id="Q5FV35">
    <property type="expression patterns" value="baseline and differential"/>
</dbReference>
<dbReference type="GO" id="GO:0005768">
    <property type="term" value="C:endosome"/>
    <property type="evidence" value="ECO:0007669"/>
    <property type="project" value="UniProtKB-SubCell"/>
</dbReference>
<dbReference type="GO" id="GO:0005634">
    <property type="term" value="C:nucleus"/>
    <property type="evidence" value="ECO:0000250"/>
    <property type="project" value="UniProtKB"/>
</dbReference>
<dbReference type="GO" id="GO:0005524">
    <property type="term" value="F:ATP binding"/>
    <property type="evidence" value="ECO:0007669"/>
    <property type="project" value="UniProtKB-KW"/>
</dbReference>
<dbReference type="GO" id="GO:0016887">
    <property type="term" value="F:ATP hydrolysis activity"/>
    <property type="evidence" value="ECO:0000250"/>
    <property type="project" value="UniProtKB"/>
</dbReference>
<dbReference type="GO" id="GO:0003677">
    <property type="term" value="F:DNA binding"/>
    <property type="evidence" value="ECO:0000250"/>
    <property type="project" value="UniProtKB"/>
</dbReference>
<dbReference type="GO" id="GO:0004519">
    <property type="term" value="F:endonuclease activity"/>
    <property type="evidence" value="ECO:0000250"/>
    <property type="project" value="UniProtKB"/>
</dbReference>
<dbReference type="GO" id="GO:0016301">
    <property type="term" value="F:kinase activity"/>
    <property type="evidence" value="ECO:0007669"/>
    <property type="project" value="UniProtKB-KW"/>
</dbReference>
<dbReference type="GO" id="GO:0003723">
    <property type="term" value="F:RNA binding"/>
    <property type="evidence" value="ECO:0000250"/>
    <property type="project" value="UniProtKB"/>
</dbReference>
<dbReference type="GO" id="GO:0006325">
    <property type="term" value="P:chromatin organization"/>
    <property type="evidence" value="ECO:0007669"/>
    <property type="project" value="UniProtKB-KW"/>
</dbReference>
<dbReference type="GO" id="GO:0051607">
    <property type="term" value="P:defense response to virus"/>
    <property type="evidence" value="ECO:0000315"/>
    <property type="project" value="UniProtKB"/>
</dbReference>
<dbReference type="GO" id="GO:0006281">
    <property type="term" value="P:DNA repair"/>
    <property type="evidence" value="ECO:0007669"/>
    <property type="project" value="UniProtKB-KW"/>
</dbReference>
<dbReference type="GO" id="GO:0009626">
    <property type="term" value="P:plant-type hypersensitive response"/>
    <property type="evidence" value="ECO:0000315"/>
    <property type="project" value="UniProtKB"/>
</dbReference>
<dbReference type="GO" id="GO:1900426">
    <property type="term" value="P:positive regulation of defense response to bacterium"/>
    <property type="evidence" value="ECO:0000315"/>
    <property type="project" value="UniProtKB"/>
</dbReference>
<dbReference type="GO" id="GO:1901672">
    <property type="term" value="P:positive regulation of systemic acquired resistance"/>
    <property type="evidence" value="ECO:0000315"/>
    <property type="project" value="UniProtKB"/>
</dbReference>
<dbReference type="GO" id="GO:0006282">
    <property type="term" value="P:regulation of DNA repair"/>
    <property type="evidence" value="ECO:0000250"/>
    <property type="project" value="UniProtKB"/>
</dbReference>
<dbReference type="GO" id="GO:0031047">
    <property type="term" value="P:regulatory ncRNA-mediated gene silencing"/>
    <property type="evidence" value="ECO:0007669"/>
    <property type="project" value="UniProtKB-KW"/>
</dbReference>
<dbReference type="FunFam" id="3.30.565.10:FF:000075">
    <property type="entry name" value="MORC family CW-type zinc finger protein 4"/>
    <property type="match status" value="1"/>
</dbReference>
<dbReference type="Gene3D" id="3.30.565.10">
    <property type="entry name" value="Histidine kinase-like ATPase, C-terminal domain"/>
    <property type="match status" value="1"/>
</dbReference>
<dbReference type="InterPro" id="IPR036890">
    <property type="entry name" value="HATPase_C_sf"/>
</dbReference>
<dbReference type="InterPro" id="IPR045261">
    <property type="entry name" value="MORC_ATPase"/>
</dbReference>
<dbReference type="InterPro" id="IPR041006">
    <property type="entry name" value="Morc_S5"/>
</dbReference>
<dbReference type="PANTHER" id="PTHR23336:SF50">
    <property type="entry name" value="PROTEIN MICRORCHIDIA 1-RELATED"/>
    <property type="match status" value="1"/>
</dbReference>
<dbReference type="PANTHER" id="PTHR23336">
    <property type="entry name" value="ZINC FINGER CW-TYPE COILED-COIL DOMAIN PROTEIN 3"/>
    <property type="match status" value="1"/>
</dbReference>
<dbReference type="Pfam" id="PF13589">
    <property type="entry name" value="HATPase_c_3"/>
    <property type="match status" value="1"/>
</dbReference>
<dbReference type="Pfam" id="PF17942">
    <property type="entry name" value="Morc6_S5"/>
    <property type="match status" value="1"/>
</dbReference>
<dbReference type="SUPFAM" id="SSF55874">
    <property type="entry name" value="ATPase domain of HSP90 chaperone/DNA topoisomerase II/histidine kinase"/>
    <property type="match status" value="1"/>
</dbReference>
<feature type="chain" id="PRO_0000434977" description="Protein MICRORCHIDIA 2">
    <location>
        <begin position="1"/>
        <end position="626"/>
    </location>
</feature>
<feature type="coiled-coil region" evidence="3">
    <location>
        <begin position="579"/>
        <end position="626"/>
    </location>
</feature>
<feature type="sequence conflict" description="In Ref. 3; AAO22768." evidence="12" ref="3">
    <original>S</original>
    <variation>C</variation>
    <location>
        <position position="233"/>
    </location>
</feature>
<feature type="sequence conflict" description="In Ref. 3; AAO22768." evidence="12" ref="3">
    <original>R</original>
    <variation>K</variation>
    <location>
        <position position="580"/>
    </location>
</feature>
<proteinExistence type="evidence at protein level"/>
<name>MORC2_ARATH</name>
<comment type="function">
    <text evidence="1 5 6 7 9">Mediator of defense signaling triggered by distinct classes of R proteins. Required during hypersensitive response (HR) that confers disease resistance to turnip crinkle virus (TCV) (PubMed:19704828). Contributes to resistance against Pseudomonas syringae and Hyaloperonospora arabidopsidis, at early stages prior to cytosolic calcium ions Ca(2+) accumulation (PubMed:20332379). Required for pathogen-associated molecular pattern (PAMP)-triggered immunity, basal resistance, non-host resistance and systemic acquired resistance (SAR) (PubMed:23250427). Involved in RNA-directed DNA methylation (RdDM) as a component of the RdDM machinery and required for gene silencing. May also be involved in the regulation of chromatin architecture to maintain gene silencing (PubMed:24799676). Exhibits ATPase activity (By similarity).</text>
</comment>
<comment type="cofactor">
    <cofactor evidence="2">
        <name>Mg(2+)</name>
        <dbReference type="ChEBI" id="CHEBI:18420"/>
    </cofactor>
    <cofactor evidence="2">
        <name>Mn(2+)</name>
        <dbReference type="ChEBI" id="CHEBI:29035"/>
    </cofactor>
</comment>
<comment type="subunit">
    <text evidence="8 9">Homodimer and heterodimer with MORC6. Component of an RNA-directed DNA methylation (RdDM) complex that contains at least MORC6, MORC1/CRT1, MORC2, SWI3D and SUVH9. Binds directly to SUVH9.</text>
</comment>
<comment type="subcellular location">
    <subcellularLocation>
        <location evidence="2 4">Nucleus</location>
    </subcellularLocation>
    <subcellularLocation>
        <location evidence="2">Endosome</location>
    </subcellularLocation>
    <text evidence="2">Present in nuclear bodies near chromocenters. Localized in endosome-like vesicles displaying rapid cytosolic streaming. Accumulates in the nucleus following pathogen-associated molecular pattern (PAMP) treatment or infection with an avirulent pathogen.</text>
</comment>
<comment type="disruption phenotype">
    <text evidence="6 7 9">In the double mutant crt1-2 crh1-1, compromised resistance to avirulent Pseudomonas syringae and Hyaloperonospora arabidopsidis associated with compromised cytosolic calcium accumulation upon infection (PubMed:20332379, PubMed:24799676). The double mutant crt1-2 crh1-1 also exhibits an increased sensitivity to turnip crinkle virus (TCV), and reduced defense response mediated by flg22 against Pseudomonas syringae (Pst). Impaired non-host resistance toward Phytophthora infestans and altered systemic acquired resistance (SAR) triggered by P.syringae pv. maculicola (Psm) AvrRpt2 cor(-) (PubMed:23250427).</text>
</comment>
<comment type="similarity">
    <text evidence="12">Belongs to the MORC ATPase protein family.</text>
</comment>
<comment type="sequence caution" evidence="12">
    <conflict type="erroneous gene model prediction">
        <sequence resource="EMBL-CDS" id="CAA18134"/>
    </conflict>
</comment>
<comment type="sequence caution" evidence="12">
    <conflict type="erroneous gene model prediction">
        <sequence resource="EMBL-CDS" id="CAB80299"/>
    </conflict>
</comment>
<reference key="1">
    <citation type="journal article" date="1999" name="Nature">
        <title>Sequence and analysis of chromosome 4 of the plant Arabidopsis thaliana.</title>
        <authorList>
            <person name="Mayer K.F.X."/>
            <person name="Schueller C."/>
            <person name="Wambutt R."/>
            <person name="Murphy G."/>
            <person name="Volckaert G."/>
            <person name="Pohl T."/>
            <person name="Duesterhoeft A."/>
            <person name="Stiekema W."/>
            <person name="Entian K.-D."/>
            <person name="Terryn N."/>
            <person name="Harris B."/>
            <person name="Ansorge W."/>
            <person name="Brandt P."/>
            <person name="Grivell L.A."/>
            <person name="Rieger M."/>
            <person name="Weichselgartner M."/>
            <person name="de Simone V."/>
            <person name="Obermaier B."/>
            <person name="Mache R."/>
            <person name="Mueller M."/>
            <person name="Kreis M."/>
            <person name="Delseny M."/>
            <person name="Puigdomenech P."/>
            <person name="Watson M."/>
            <person name="Schmidtheini T."/>
            <person name="Reichert B."/>
            <person name="Portetelle D."/>
            <person name="Perez-Alonso M."/>
            <person name="Boutry M."/>
            <person name="Bancroft I."/>
            <person name="Vos P."/>
            <person name="Hoheisel J."/>
            <person name="Zimmermann W."/>
            <person name="Wedler H."/>
            <person name="Ridley P."/>
            <person name="Langham S.-A."/>
            <person name="McCullagh B."/>
            <person name="Bilham L."/>
            <person name="Robben J."/>
            <person name="van der Schueren J."/>
            <person name="Grymonprez B."/>
            <person name="Chuang Y.-J."/>
            <person name="Vandenbussche F."/>
            <person name="Braeken M."/>
            <person name="Weltjens I."/>
            <person name="Voet M."/>
            <person name="Bastiaens I."/>
            <person name="Aert R."/>
            <person name="Defoor E."/>
            <person name="Weitzenegger T."/>
            <person name="Bothe G."/>
            <person name="Ramsperger U."/>
            <person name="Hilbert H."/>
            <person name="Braun M."/>
            <person name="Holzer E."/>
            <person name="Brandt A."/>
            <person name="Peters S."/>
            <person name="van Staveren M."/>
            <person name="Dirkse W."/>
            <person name="Mooijman P."/>
            <person name="Klein Lankhorst R."/>
            <person name="Rose M."/>
            <person name="Hauf J."/>
            <person name="Koetter P."/>
            <person name="Berneiser S."/>
            <person name="Hempel S."/>
            <person name="Feldpausch M."/>
            <person name="Lamberth S."/>
            <person name="Van den Daele H."/>
            <person name="De Keyser A."/>
            <person name="Buysshaert C."/>
            <person name="Gielen J."/>
            <person name="Villarroel R."/>
            <person name="De Clercq R."/>
            <person name="van Montagu M."/>
            <person name="Rogers J."/>
            <person name="Cronin A."/>
            <person name="Quail M.A."/>
            <person name="Bray-Allen S."/>
            <person name="Clark L."/>
            <person name="Doggett J."/>
            <person name="Hall S."/>
            <person name="Kay M."/>
            <person name="Lennard N."/>
            <person name="McLay K."/>
            <person name="Mayes R."/>
            <person name="Pettett A."/>
            <person name="Rajandream M.A."/>
            <person name="Lyne M."/>
            <person name="Benes V."/>
            <person name="Rechmann S."/>
            <person name="Borkova D."/>
            <person name="Bloecker H."/>
            <person name="Scharfe M."/>
            <person name="Grimm M."/>
            <person name="Loehnert T.-H."/>
            <person name="Dose S."/>
            <person name="de Haan M."/>
            <person name="Maarse A.C."/>
            <person name="Schaefer M."/>
            <person name="Mueller-Auer S."/>
            <person name="Gabel C."/>
            <person name="Fuchs M."/>
            <person name="Fartmann B."/>
            <person name="Granderath K."/>
            <person name="Dauner D."/>
            <person name="Herzl A."/>
            <person name="Neumann S."/>
            <person name="Argiriou A."/>
            <person name="Vitale D."/>
            <person name="Liguori R."/>
            <person name="Piravandi E."/>
            <person name="Massenet O."/>
            <person name="Quigley F."/>
            <person name="Clabauld G."/>
            <person name="Muendlein A."/>
            <person name="Felber R."/>
            <person name="Schnabl S."/>
            <person name="Hiller R."/>
            <person name="Schmidt W."/>
            <person name="Lecharny A."/>
            <person name="Aubourg S."/>
            <person name="Chefdor F."/>
            <person name="Cooke R."/>
            <person name="Berger C."/>
            <person name="Monfort A."/>
            <person name="Casacuberta E."/>
            <person name="Gibbons T."/>
            <person name="Weber N."/>
            <person name="Vandenbol M."/>
            <person name="Bargues M."/>
            <person name="Terol J."/>
            <person name="Torres A."/>
            <person name="Perez-Perez A."/>
            <person name="Purnelle B."/>
            <person name="Bent E."/>
            <person name="Johnson S."/>
            <person name="Tacon D."/>
            <person name="Jesse T."/>
            <person name="Heijnen L."/>
            <person name="Schwarz S."/>
            <person name="Scholler P."/>
            <person name="Heber S."/>
            <person name="Francs P."/>
            <person name="Bielke C."/>
            <person name="Frishman D."/>
            <person name="Haase D."/>
            <person name="Lemcke K."/>
            <person name="Mewes H.-W."/>
            <person name="Stocker S."/>
            <person name="Zaccaria P."/>
            <person name="Bevan M."/>
            <person name="Wilson R.K."/>
            <person name="de la Bastide M."/>
            <person name="Habermann K."/>
            <person name="Parnell L."/>
            <person name="Dedhia N."/>
            <person name="Gnoj L."/>
            <person name="Schutz K."/>
            <person name="Huang E."/>
            <person name="Spiegel L."/>
            <person name="Sekhon M."/>
            <person name="Murray J."/>
            <person name="Sheet P."/>
            <person name="Cordes M."/>
            <person name="Abu-Threideh J."/>
            <person name="Stoneking T."/>
            <person name="Kalicki J."/>
            <person name="Graves T."/>
            <person name="Harmon G."/>
            <person name="Edwards J."/>
            <person name="Latreille P."/>
            <person name="Courtney L."/>
            <person name="Cloud J."/>
            <person name="Abbott A."/>
            <person name="Scott K."/>
            <person name="Johnson D."/>
            <person name="Minx P."/>
            <person name="Bentley D."/>
            <person name="Fulton B."/>
            <person name="Miller N."/>
            <person name="Greco T."/>
            <person name="Kemp K."/>
            <person name="Kramer J."/>
            <person name="Fulton L."/>
            <person name="Mardis E."/>
            <person name="Dante M."/>
            <person name="Pepin K."/>
            <person name="Hillier L.W."/>
            <person name="Nelson J."/>
            <person name="Spieth J."/>
            <person name="Ryan E."/>
            <person name="Andrews S."/>
            <person name="Geisel C."/>
            <person name="Layman D."/>
            <person name="Du H."/>
            <person name="Ali J."/>
            <person name="Berghoff A."/>
            <person name="Jones K."/>
            <person name="Drone K."/>
            <person name="Cotton M."/>
            <person name="Joshu C."/>
            <person name="Antonoiu B."/>
            <person name="Zidanic M."/>
            <person name="Strong C."/>
            <person name="Sun H."/>
            <person name="Lamar B."/>
            <person name="Yordan C."/>
            <person name="Ma P."/>
            <person name="Zhong J."/>
            <person name="Preston R."/>
            <person name="Vil D."/>
            <person name="Shekher M."/>
            <person name="Matero A."/>
            <person name="Shah R."/>
            <person name="Swaby I.K."/>
            <person name="O'Shaughnessy A."/>
            <person name="Rodriguez M."/>
            <person name="Hoffman J."/>
            <person name="Till S."/>
            <person name="Granat S."/>
            <person name="Shohdy N."/>
            <person name="Hasegawa A."/>
            <person name="Hameed A."/>
            <person name="Lodhi M."/>
            <person name="Johnson A."/>
            <person name="Chen E."/>
            <person name="Marra M.A."/>
            <person name="Martienssen R."/>
            <person name="McCombie W.R."/>
        </authorList>
    </citation>
    <scope>NUCLEOTIDE SEQUENCE [LARGE SCALE GENOMIC DNA]</scope>
    <source>
        <strain>cv. Columbia</strain>
    </source>
</reference>
<reference key="2">
    <citation type="journal article" date="2017" name="Plant J.">
        <title>Araport11: a complete reannotation of the Arabidopsis thaliana reference genome.</title>
        <authorList>
            <person name="Cheng C.Y."/>
            <person name="Krishnakumar V."/>
            <person name="Chan A.P."/>
            <person name="Thibaud-Nissen F."/>
            <person name="Schobel S."/>
            <person name="Town C.D."/>
        </authorList>
    </citation>
    <scope>GENOME REANNOTATION</scope>
    <source>
        <strain>cv. Columbia</strain>
    </source>
</reference>
<reference key="3">
    <citation type="journal article" date="2003" name="Science">
        <title>Empirical analysis of transcriptional activity in the Arabidopsis genome.</title>
        <authorList>
            <person name="Yamada K."/>
            <person name="Lim J."/>
            <person name="Dale J.M."/>
            <person name="Chen H."/>
            <person name="Shinn P."/>
            <person name="Palm C.J."/>
            <person name="Southwick A.M."/>
            <person name="Wu H.C."/>
            <person name="Kim C.J."/>
            <person name="Nguyen M."/>
            <person name="Pham P.K."/>
            <person name="Cheuk R.F."/>
            <person name="Karlin-Newmann G."/>
            <person name="Liu S.X."/>
            <person name="Lam B."/>
            <person name="Sakano H."/>
            <person name="Wu T."/>
            <person name="Yu G."/>
            <person name="Miranda M."/>
            <person name="Quach H.L."/>
            <person name="Tripp M."/>
            <person name="Chang C.H."/>
            <person name="Lee J.M."/>
            <person name="Toriumi M.J."/>
            <person name="Chan M.M."/>
            <person name="Tang C.C."/>
            <person name="Onodera C.S."/>
            <person name="Deng J.M."/>
            <person name="Akiyama K."/>
            <person name="Ansari Y."/>
            <person name="Arakawa T."/>
            <person name="Banh J."/>
            <person name="Banno F."/>
            <person name="Bowser L."/>
            <person name="Brooks S.Y."/>
            <person name="Carninci P."/>
            <person name="Chao Q."/>
            <person name="Choy N."/>
            <person name="Enju A."/>
            <person name="Goldsmith A.D."/>
            <person name="Gurjal M."/>
            <person name="Hansen N.F."/>
            <person name="Hayashizaki Y."/>
            <person name="Johnson-Hopson C."/>
            <person name="Hsuan V.W."/>
            <person name="Iida K."/>
            <person name="Karnes M."/>
            <person name="Khan S."/>
            <person name="Koesema E."/>
            <person name="Ishida J."/>
            <person name="Jiang P.X."/>
            <person name="Jones T."/>
            <person name="Kawai J."/>
            <person name="Kamiya A."/>
            <person name="Meyers C."/>
            <person name="Nakajima M."/>
            <person name="Narusaka M."/>
            <person name="Seki M."/>
            <person name="Sakurai T."/>
            <person name="Satou M."/>
            <person name="Tamse R."/>
            <person name="Vaysberg M."/>
            <person name="Wallender E.K."/>
            <person name="Wong C."/>
            <person name="Yamamura Y."/>
            <person name="Yuan S."/>
            <person name="Shinozaki K."/>
            <person name="Davis R.W."/>
            <person name="Theologis A."/>
            <person name="Ecker J.R."/>
        </authorList>
    </citation>
    <scope>NUCLEOTIDE SEQUENCE [LARGE SCALE MRNA]</scope>
    <source>
        <strain>cv. Columbia</strain>
    </source>
</reference>
<reference key="4">
    <citation type="submission" date="2005-01" db="EMBL/GenBank/DDBJ databases">
        <title>Arabidopsis ORF clones.</title>
        <authorList>
            <person name="Cheuk R.F."/>
            <person name="Chen H."/>
            <person name="Kim C.J."/>
            <person name="Shinn P."/>
            <person name="Ecker J.R."/>
        </authorList>
    </citation>
    <scope>NUCLEOTIDE SEQUENCE [LARGE SCALE MRNA]</scope>
    <source>
        <strain>cv. Columbia</strain>
    </source>
</reference>
<reference key="5">
    <citation type="journal article" date="2008" name="Plant Signal. Behav.">
        <title>The involvement of the Arabidopsis CRT1 ATPase family in disease resistance protein-mediated signaling.</title>
        <authorList>
            <person name="Kang H.-G."/>
            <person name="Klessig D.F."/>
        </authorList>
    </citation>
    <scope>FUNCTION</scope>
    <scope>GENE FAMILY</scope>
    <scope>NOMENCLATURE</scope>
</reference>
<reference key="6">
    <citation type="journal article" date="2010" name="Plant Cell">
        <title>Endosome-associated CRT1 functions early in resistance gene-mediated defense signaling in Arabidopsis and tobacco.</title>
        <authorList>
            <person name="Kang H.-G."/>
            <person name="Oh C.-S."/>
            <person name="Sato M."/>
            <person name="Katagiri F."/>
            <person name="Glazebrook J."/>
            <person name="Takahashi H."/>
            <person name="Kachroo P."/>
            <person name="Martin G.B."/>
            <person name="Klessig D.F."/>
        </authorList>
    </citation>
    <scope>FUNCTION</scope>
    <scope>DISRUPTION PHENOTYPE</scope>
</reference>
<reference key="7">
    <citation type="journal article" date="2012" name="Nat. Commun.">
        <title>CRT1 is a nuclear-translocated MORC endonuclease that participates in multiple levels of plant immunity.</title>
        <authorList>
            <person name="Kang H.-G."/>
            <person name="Hyong W.C."/>
            <person name="von Einem S."/>
            <person name="Manosalva P."/>
            <person name="Ehlers K."/>
            <person name="Liu P.-P."/>
            <person name="Buxa S.V."/>
            <person name="Moreau M."/>
            <person name="Mang H.-G."/>
            <person name="Kachroo P."/>
            <person name="Kogel K.-H."/>
            <person name="Klessig D.F."/>
        </authorList>
    </citation>
    <scope>FUNCTION</scope>
    <scope>DISRUPTION PHENOTYPE</scope>
</reference>
<reference key="8">
    <citation type="journal article" date="2014" name="PLoS Genet.">
        <title>The SET domain proteins SUVH2 and SUVH9 are required for Pol V occupancy at RNA-directed DNA methylation loci.</title>
        <authorList>
            <person name="Liu Z.-W."/>
            <person name="Shao C.-R."/>
            <person name="Zhang C.-J."/>
            <person name="Zhou J.-X."/>
            <person name="Zhang S.-W."/>
            <person name="Li L."/>
            <person name="Chen S."/>
            <person name="Huang H.-W."/>
            <person name="Cai T."/>
            <person name="He X.-J."/>
        </authorList>
    </citation>
    <scope>SUBUNIT</scope>
    <scope>INTERACTION WITH MORC6 AND SUVH9</scope>
</reference>
<reference key="9">
    <citation type="journal article" date="2014" name="Proc. Natl. Acad. Sci. U.S.A.">
        <title>Transcriptional gene silencing by Arabidopsis microrchidia homologues involves the formation of heteromers.</title>
        <authorList>
            <person name="Moissiard G."/>
            <person name="Bischof S."/>
            <person name="Husmann D."/>
            <person name="Pastor W.A."/>
            <person name="Hale C.J."/>
            <person name="Yen L."/>
            <person name="Stroud H."/>
            <person name="Papikian A."/>
            <person name="Vashisht A.A."/>
            <person name="Wohlschlegel J.A."/>
            <person name="Jacobsen S.E."/>
        </authorList>
    </citation>
    <scope>FUNCTION</scope>
    <scope>DISRUPTION PHENOTYPE</scope>
    <scope>INTERACTION WITH MORC6</scope>
    <scope>GENE FAMILY</scope>
    <scope>NOMENCLATURE</scope>
</reference>
<protein>
    <recommendedName>
        <fullName evidence="11">Protein MICRORCHIDIA 2</fullName>
        <shortName evidence="11">AtMORC2</shortName>
        <ecNumber>3.6.-.-</ecNumber>
    </recommendedName>
    <alternativeName>
        <fullName evidence="10">Protein CRT1-homolog 1</fullName>
        <shortName evidence="10">CRT1-h1</shortName>
    </alternativeName>
</protein>
<accession>Q5FV35</accession>
<accession>O65519</accession>
<accession>Q84WN9</accession>
<organism evidence="14">
    <name type="scientific">Arabidopsis thaliana</name>
    <name type="common">Mouse-ear cress</name>
    <dbReference type="NCBI Taxonomy" id="3702"/>
    <lineage>
        <taxon>Eukaryota</taxon>
        <taxon>Viridiplantae</taxon>
        <taxon>Streptophyta</taxon>
        <taxon>Embryophyta</taxon>
        <taxon>Tracheophyta</taxon>
        <taxon>Spermatophyta</taxon>
        <taxon>Magnoliopsida</taxon>
        <taxon>eudicotyledons</taxon>
        <taxon>Gunneridae</taxon>
        <taxon>Pentapetalae</taxon>
        <taxon>rosids</taxon>
        <taxon>malvids</taxon>
        <taxon>Brassicales</taxon>
        <taxon>Brassicaceae</taxon>
        <taxon>Camelineae</taxon>
        <taxon>Arabidopsis</taxon>
    </lineage>
</organism>
<gene>
    <name evidence="10" type="primary">MORC2</name>
    <name evidence="11" type="synonym">CRH1</name>
    <name evidence="13" type="ordered locus">At4g36280</name>
    <name evidence="15" type="ORF">F23E13.170</name>
</gene>